<reference key="1">
    <citation type="journal article" date="2000" name="Nature">
        <title>DNA sequence of both chromosomes of the cholera pathogen Vibrio cholerae.</title>
        <authorList>
            <person name="Heidelberg J.F."/>
            <person name="Eisen J.A."/>
            <person name="Nelson W.C."/>
            <person name="Clayton R.A."/>
            <person name="Gwinn M.L."/>
            <person name="Dodson R.J."/>
            <person name="Haft D.H."/>
            <person name="Hickey E.K."/>
            <person name="Peterson J.D."/>
            <person name="Umayam L.A."/>
            <person name="Gill S.R."/>
            <person name="Nelson K.E."/>
            <person name="Read T.D."/>
            <person name="Tettelin H."/>
            <person name="Richardson D.L."/>
            <person name="Ermolaeva M.D."/>
            <person name="Vamathevan J.J."/>
            <person name="Bass S."/>
            <person name="Qin H."/>
            <person name="Dragoi I."/>
            <person name="Sellers P."/>
            <person name="McDonald L.A."/>
            <person name="Utterback T.R."/>
            <person name="Fleischmann R.D."/>
            <person name="Nierman W.C."/>
            <person name="White O."/>
            <person name="Salzberg S.L."/>
            <person name="Smith H.O."/>
            <person name="Colwell R.R."/>
            <person name="Mekalanos J.J."/>
            <person name="Venter J.C."/>
            <person name="Fraser C.M."/>
        </authorList>
    </citation>
    <scope>NUCLEOTIDE SEQUENCE [LARGE SCALE GENOMIC DNA]</scope>
    <source>
        <strain>ATCC 39315 / El Tor Inaba N16961</strain>
    </source>
</reference>
<name>Y1345_VIBCH</name>
<protein>
    <recommendedName>
        <fullName>Putative dioxygenase VC_1345</fullName>
        <ecNumber>1.13.-.-</ecNumber>
    </recommendedName>
</protein>
<gene>
    <name type="ordered locus">VC_1345</name>
</gene>
<feature type="chain" id="PRO_0000220259" description="Putative dioxygenase VC_1345">
    <location>
        <begin position="1"/>
        <end position="378"/>
    </location>
</feature>
<feature type="binding site" evidence="1">
    <location>
        <position position="288"/>
    </location>
    <ligand>
        <name>Fe cation</name>
        <dbReference type="ChEBI" id="CHEBI:24875"/>
    </ligand>
</feature>
<feature type="binding site" evidence="1">
    <location>
        <position position="294"/>
    </location>
    <ligand>
        <name>Fe cation</name>
        <dbReference type="ChEBI" id="CHEBI:24875"/>
    </ligand>
</feature>
<feature type="binding site" evidence="1">
    <location>
        <position position="324"/>
    </location>
    <ligand>
        <name>Fe cation</name>
        <dbReference type="ChEBI" id="CHEBI:24875"/>
    </ligand>
</feature>
<evidence type="ECO:0000250" key="1"/>
<evidence type="ECO:0000305" key="2"/>
<proteinExistence type="inferred from homology"/>
<accession>Q9KSB4</accession>
<sequence length="378" mass="43247">MHKWITFPHREGTCSRQAHADFPEQAIYEREAGRSGFFGPAAHFHHQHAPTGWSEWEGELRPRAFNFNHVEGVNALSPWQVPLLLHNHEVKVRVWKLEQAMPALARNADGDELLFIHQGKADLYCDYGHMVVSEGDYALIPRSTNWRLEPIEPLFILMIENTDAAYALPEKGLVGNHAVFDPAVLDVPSINDQFRAQYSEQQTQVQVKRHGQLSTITFPFNPLDAVGWHGDLSVVRLNWRDIRPLMSHRYHLPPSAHTTFVGQGFVVCTFVPRPIESDPGALKVPFYHNNDDYDEVLFYHAGDFFSRDNIEAGMVTFHPAGFTHGPHPKAFQAGLEYRKKFTDEVAVMIDTRHALQFSDAAQQVENRQYVYSWQSKVE</sequence>
<comment type="cofactor">
    <cofactor evidence="1">
        <name>Fe cation</name>
        <dbReference type="ChEBI" id="CHEBI:24875"/>
    </cofactor>
</comment>
<comment type="similarity">
    <text evidence="2">Belongs to the homogentisate dioxygenase family.</text>
</comment>
<dbReference type="EC" id="1.13.-.-"/>
<dbReference type="EMBL" id="AE003852">
    <property type="protein sequence ID" value="AAF94503.1"/>
    <property type="molecule type" value="Genomic_DNA"/>
</dbReference>
<dbReference type="PIR" id="D82211">
    <property type="entry name" value="D82211"/>
</dbReference>
<dbReference type="RefSeq" id="NP_230989.1">
    <property type="nucleotide sequence ID" value="NC_002505.1"/>
</dbReference>
<dbReference type="RefSeq" id="WP_000549756.1">
    <property type="nucleotide sequence ID" value="NZ_LT906614.1"/>
</dbReference>
<dbReference type="SMR" id="Q9KSB4"/>
<dbReference type="STRING" id="243277.VC_1345"/>
<dbReference type="DNASU" id="2614799"/>
<dbReference type="EnsemblBacteria" id="AAF94503">
    <property type="protein sequence ID" value="AAF94503"/>
    <property type="gene ID" value="VC_1345"/>
</dbReference>
<dbReference type="KEGG" id="vch:VC_1345"/>
<dbReference type="PATRIC" id="fig|243277.26.peg.1282"/>
<dbReference type="eggNOG" id="COG3508">
    <property type="taxonomic scope" value="Bacteria"/>
</dbReference>
<dbReference type="HOGENOM" id="CLU_053101_0_0_6"/>
<dbReference type="Proteomes" id="UP000000584">
    <property type="component" value="Chromosome 1"/>
</dbReference>
<dbReference type="GO" id="GO:0004411">
    <property type="term" value="F:homogentisate 1,2-dioxygenase activity"/>
    <property type="evidence" value="ECO:0000318"/>
    <property type="project" value="GO_Central"/>
</dbReference>
<dbReference type="GO" id="GO:0046872">
    <property type="term" value="F:metal ion binding"/>
    <property type="evidence" value="ECO:0007669"/>
    <property type="project" value="UniProtKB-KW"/>
</dbReference>
<dbReference type="GO" id="GO:0006559">
    <property type="term" value="P:L-phenylalanine catabolic process"/>
    <property type="evidence" value="ECO:0000318"/>
    <property type="project" value="GO_Central"/>
</dbReference>
<dbReference type="GO" id="GO:0006570">
    <property type="term" value="P:tyrosine metabolic process"/>
    <property type="evidence" value="ECO:0007669"/>
    <property type="project" value="InterPro"/>
</dbReference>
<dbReference type="Gene3D" id="2.60.120.10">
    <property type="entry name" value="Jelly Rolls"/>
    <property type="match status" value="1"/>
</dbReference>
<dbReference type="InterPro" id="IPR046452">
    <property type="entry name" value="HgmA_N"/>
</dbReference>
<dbReference type="InterPro" id="IPR005708">
    <property type="entry name" value="Homogentis_dOase"/>
</dbReference>
<dbReference type="InterPro" id="IPR014710">
    <property type="entry name" value="RmlC-like_jellyroll"/>
</dbReference>
<dbReference type="InterPro" id="IPR011051">
    <property type="entry name" value="RmlC_Cupin_sf"/>
</dbReference>
<dbReference type="PANTHER" id="PTHR11056">
    <property type="entry name" value="HOMOGENTISATE 1,2-DIOXYGENASE"/>
    <property type="match status" value="1"/>
</dbReference>
<dbReference type="PANTHER" id="PTHR11056:SF0">
    <property type="entry name" value="HOMOGENTISATE 1,2-DIOXYGENASE"/>
    <property type="match status" value="1"/>
</dbReference>
<dbReference type="Pfam" id="PF20510">
    <property type="entry name" value="HgmA_N"/>
    <property type="match status" value="1"/>
</dbReference>
<dbReference type="SUPFAM" id="SSF51182">
    <property type="entry name" value="RmlC-like cupins"/>
    <property type="match status" value="1"/>
</dbReference>
<organism>
    <name type="scientific">Vibrio cholerae serotype O1 (strain ATCC 39315 / El Tor Inaba N16961)</name>
    <dbReference type="NCBI Taxonomy" id="243277"/>
    <lineage>
        <taxon>Bacteria</taxon>
        <taxon>Pseudomonadati</taxon>
        <taxon>Pseudomonadota</taxon>
        <taxon>Gammaproteobacteria</taxon>
        <taxon>Vibrionales</taxon>
        <taxon>Vibrionaceae</taxon>
        <taxon>Vibrio</taxon>
    </lineage>
</organism>
<keyword id="KW-0223">Dioxygenase</keyword>
<keyword id="KW-0408">Iron</keyword>
<keyword id="KW-0479">Metal-binding</keyword>
<keyword id="KW-0560">Oxidoreductase</keyword>
<keyword id="KW-1185">Reference proteome</keyword>